<proteinExistence type="inferred from homology"/>
<name>DF264_ARATH</name>
<keyword id="KW-0929">Antimicrobial</keyword>
<keyword id="KW-1015">Disulfide bond</keyword>
<keyword id="KW-0295">Fungicide</keyword>
<keyword id="KW-0611">Plant defense</keyword>
<keyword id="KW-1185">Reference proteome</keyword>
<keyword id="KW-0964">Secreted</keyword>
<keyword id="KW-0732">Signal</keyword>
<accession>Q2V2W3</accession>
<gene>
    <name type="ordered locus">At5g62623</name>
    <name type="ORF">MRG21</name>
</gene>
<comment type="subcellular location">
    <subcellularLocation>
        <location evidence="1">Secreted</location>
    </subcellularLocation>
</comment>
<comment type="similarity">
    <text evidence="3">Belongs to the DEFL family.</text>
</comment>
<comment type="caution">
    <text evidence="3">Lacks 1 of the 4 disulfide bonds, which are conserved features of the family.</text>
</comment>
<dbReference type="EMBL" id="AB020751">
    <property type="status" value="NOT_ANNOTATED_CDS"/>
    <property type="molecule type" value="Genomic_DNA"/>
</dbReference>
<dbReference type="EMBL" id="CP002688">
    <property type="protein sequence ID" value="AED97633.1"/>
    <property type="molecule type" value="Genomic_DNA"/>
</dbReference>
<dbReference type="RefSeq" id="NP_001032124.1">
    <property type="nucleotide sequence ID" value="NM_001037047.2"/>
</dbReference>
<dbReference type="STRING" id="3702.Q2V2W3"/>
<dbReference type="PaxDb" id="3702-AT5G62623.1"/>
<dbReference type="ProteomicsDB" id="224138"/>
<dbReference type="EnsemblPlants" id="AT5G62623.1">
    <property type="protein sequence ID" value="AT5G62623.1"/>
    <property type="gene ID" value="AT5G62623"/>
</dbReference>
<dbReference type="GeneID" id="3771550"/>
<dbReference type="Gramene" id="AT5G62623.1">
    <property type="protein sequence ID" value="AT5G62623.1"/>
    <property type="gene ID" value="AT5G62623"/>
</dbReference>
<dbReference type="KEGG" id="ath:AT5G62623"/>
<dbReference type="Araport" id="AT5G62623"/>
<dbReference type="TAIR" id="AT5G62623"/>
<dbReference type="HOGENOM" id="CLU_2472158_0_0_1"/>
<dbReference type="InParanoid" id="Q2V2W3"/>
<dbReference type="OMA" id="DNCRENC"/>
<dbReference type="PhylomeDB" id="Q2V2W3"/>
<dbReference type="PRO" id="PR:Q2V2W3"/>
<dbReference type="Proteomes" id="UP000006548">
    <property type="component" value="Chromosome 5"/>
</dbReference>
<dbReference type="ExpressionAtlas" id="Q2V2W3">
    <property type="expression patterns" value="baseline"/>
</dbReference>
<dbReference type="GO" id="GO:0005576">
    <property type="term" value="C:extracellular region"/>
    <property type="evidence" value="ECO:0007669"/>
    <property type="project" value="UniProtKB-SubCell"/>
</dbReference>
<dbReference type="GO" id="GO:0050832">
    <property type="term" value="P:defense response to fungus"/>
    <property type="evidence" value="ECO:0007669"/>
    <property type="project" value="UniProtKB-KW"/>
</dbReference>
<dbReference type="GO" id="GO:0031640">
    <property type="term" value="P:killing of cells of another organism"/>
    <property type="evidence" value="ECO:0007669"/>
    <property type="project" value="UniProtKB-KW"/>
</dbReference>
<evidence type="ECO:0000250" key="1"/>
<evidence type="ECO:0000255" key="2"/>
<evidence type="ECO:0000305" key="3"/>
<feature type="signal peptide" evidence="2">
    <location>
        <begin position="1"/>
        <end position="26"/>
    </location>
</feature>
<feature type="chain" id="PRO_0000379726" description="Putative defensin-like protein 264">
    <location>
        <begin position="27"/>
        <end position="88"/>
    </location>
</feature>
<feature type="disulfide bond" evidence="1">
    <location>
        <begin position="47"/>
        <end position="65"/>
    </location>
</feature>
<feature type="disulfide bond" evidence="1">
    <location>
        <begin position="53"/>
        <end position="70"/>
    </location>
</feature>
<feature type="disulfide bond" evidence="1">
    <location>
        <begin position="57"/>
        <end position="72"/>
    </location>
</feature>
<reference key="1">
    <citation type="journal article" date="2000" name="DNA Res.">
        <title>Structural analysis of Arabidopsis thaliana chromosome 5. X. Sequence features of the regions of 3,076,755 bp covered by sixty P1 and TAC clones.</title>
        <authorList>
            <person name="Sato S."/>
            <person name="Nakamura Y."/>
            <person name="Kaneko T."/>
            <person name="Katoh T."/>
            <person name="Asamizu E."/>
            <person name="Kotani H."/>
            <person name="Tabata S."/>
        </authorList>
    </citation>
    <scope>NUCLEOTIDE SEQUENCE [LARGE SCALE GENOMIC DNA]</scope>
    <source>
        <strain>cv. Columbia</strain>
    </source>
</reference>
<reference key="2">
    <citation type="journal article" date="2017" name="Plant J.">
        <title>Araport11: a complete reannotation of the Arabidopsis thaliana reference genome.</title>
        <authorList>
            <person name="Cheng C.Y."/>
            <person name="Krishnakumar V."/>
            <person name="Chan A.P."/>
            <person name="Thibaud-Nissen F."/>
            <person name="Schobel S."/>
            <person name="Town C.D."/>
        </authorList>
    </citation>
    <scope>GENOME REANNOTATION</scope>
    <source>
        <strain>cv. Columbia</strain>
    </source>
</reference>
<reference key="3">
    <citation type="journal article" date="2005" name="Plant Physiol.">
        <title>Genome organization of more than 300 defensin-like genes in Arabidopsis.</title>
        <authorList>
            <person name="Silverstein K.A.T."/>
            <person name="Graham M.A."/>
            <person name="Paape T.D."/>
            <person name="VandenBosch K.A."/>
        </authorList>
    </citation>
    <scope>GENE FAMILY</scope>
</reference>
<sequence length="88" mass="9948">MEKMVLRKVVLLAILLSLSCLWVAKALEGESKVSGQVRDETPHTWYCKYDDNCRENCPGCTITKCNYGVCICSNCYHQQSDLGVESHM</sequence>
<protein>
    <recommendedName>
        <fullName>Putative defensin-like protein 264</fullName>
    </recommendedName>
</protein>
<organism>
    <name type="scientific">Arabidopsis thaliana</name>
    <name type="common">Mouse-ear cress</name>
    <dbReference type="NCBI Taxonomy" id="3702"/>
    <lineage>
        <taxon>Eukaryota</taxon>
        <taxon>Viridiplantae</taxon>
        <taxon>Streptophyta</taxon>
        <taxon>Embryophyta</taxon>
        <taxon>Tracheophyta</taxon>
        <taxon>Spermatophyta</taxon>
        <taxon>Magnoliopsida</taxon>
        <taxon>eudicotyledons</taxon>
        <taxon>Gunneridae</taxon>
        <taxon>Pentapetalae</taxon>
        <taxon>rosids</taxon>
        <taxon>malvids</taxon>
        <taxon>Brassicales</taxon>
        <taxon>Brassicaceae</taxon>
        <taxon>Camelineae</taxon>
        <taxon>Arabidopsis</taxon>
    </lineage>
</organism>